<comment type="function">
    <text evidence="1">Catalyzes the hydrolysis of 4-amino-2-methyl-5-hydroxymethylpyrimidine pyrophosphate (HMP-PP) to 4-amino-2-methyl-5-hydroxymethylpyrimidine phosphate (HMP-P).</text>
</comment>
<comment type="catalytic activity">
    <reaction evidence="1">
        <text>4-amino-2-methyl-5-(diphosphooxymethyl)pyrimidine + H2O = 4-amino-2-methyl-5-(phosphooxymethyl)pyrimidine + phosphate + H(+)</text>
        <dbReference type="Rhea" id="RHEA:27914"/>
        <dbReference type="ChEBI" id="CHEBI:15377"/>
        <dbReference type="ChEBI" id="CHEBI:15378"/>
        <dbReference type="ChEBI" id="CHEBI:43474"/>
        <dbReference type="ChEBI" id="CHEBI:57841"/>
        <dbReference type="ChEBI" id="CHEBI:58354"/>
    </reaction>
</comment>
<comment type="cofactor">
    <cofactor evidence="1">
        <name>Mg(2+)</name>
        <dbReference type="ChEBI" id="CHEBI:18420"/>
    </cofactor>
</comment>
<comment type="similarity">
    <text evidence="1">Belongs to the HAD-like hydrolase superfamily. Cof family.</text>
</comment>
<reference key="1">
    <citation type="journal article" date="2001" name="Nature">
        <title>Genome sequence of Yersinia pestis, the causative agent of plague.</title>
        <authorList>
            <person name="Parkhill J."/>
            <person name="Wren B.W."/>
            <person name="Thomson N.R."/>
            <person name="Titball R.W."/>
            <person name="Holden M.T.G."/>
            <person name="Prentice M.B."/>
            <person name="Sebaihia M."/>
            <person name="James K.D."/>
            <person name="Churcher C.M."/>
            <person name="Mungall K.L."/>
            <person name="Baker S."/>
            <person name="Basham D."/>
            <person name="Bentley S.D."/>
            <person name="Brooks K."/>
            <person name="Cerdeno-Tarraga A.-M."/>
            <person name="Chillingworth T."/>
            <person name="Cronin A."/>
            <person name="Davies R.M."/>
            <person name="Davis P."/>
            <person name="Dougan G."/>
            <person name="Feltwell T."/>
            <person name="Hamlin N."/>
            <person name="Holroyd S."/>
            <person name="Jagels K."/>
            <person name="Karlyshev A.V."/>
            <person name="Leather S."/>
            <person name="Moule S."/>
            <person name="Oyston P.C.F."/>
            <person name="Quail M.A."/>
            <person name="Rutherford K.M."/>
            <person name="Simmonds M."/>
            <person name="Skelton J."/>
            <person name="Stevens K."/>
            <person name="Whitehead S."/>
            <person name="Barrell B.G."/>
        </authorList>
    </citation>
    <scope>NUCLEOTIDE SEQUENCE [LARGE SCALE GENOMIC DNA]</scope>
    <source>
        <strain>CO-92 / Biovar Orientalis</strain>
    </source>
</reference>
<reference key="2">
    <citation type="journal article" date="2002" name="J. Bacteriol.">
        <title>Genome sequence of Yersinia pestis KIM.</title>
        <authorList>
            <person name="Deng W."/>
            <person name="Burland V."/>
            <person name="Plunkett G. III"/>
            <person name="Boutin A."/>
            <person name="Mayhew G.F."/>
            <person name="Liss P."/>
            <person name="Perna N.T."/>
            <person name="Rose D.J."/>
            <person name="Mau B."/>
            <person name="Zhou S."/>
            <person name="Schwartz D.C."/>
            <person name="Fetherston J.D."/>
            <person name="Lindler L.E."/>
            <person name="Brubaker R.R."/>
            <person name="Plano G.V."/>
            <person name="Straley S.C."/>
            <person name="McDonough K.A."/>
            <person name="Nilles M.L."/>
            <person name="Matson J.S."/>
            <person name="Blattner F.R."/>
            <person name="Perry R.D."/>
        </authorList>
    </citation>
    <scope>NUCLEOTIDE SEQUENCE [LARGE SCALE GENOMIC DNA]</scope>
    <source>
        <strain>KIM10+ / Biovar Mediaevalis</strain>
    </source>
</reference>
<reference key="3">
    <citation type="journal article" date="2004" name="DNA Res.">
        <title>Complete genome sequence of Yersinia pestis strain 91001, an isolate avirulent to humans.</title>
        <authorList>
            <person name="Song Y."/>
            <person name="Tong Z."/>
            <person name="Wang J."/>
            <person name="Wang L."/>
            <person name="Guo Z."/>
            <person name="Han Y."/>
            <person name="Zhang J."/>
            <person name="Pei D."/>
            <person name="Zhou D."/>
            <person name="Qin H."/>
            <person name="Pang X."/>
            <person name="Han Y."/>
            <person name="Zhai J."/>
            <person name="Li M."/>
            <person name="Cui B."/>
            <person name="Qi Z."/>
            <person name="Jin L."/>
            <person name="Dai R."/>
            <person name="Chen F."/>
            <person name="Li S."/>
            <person name="Ye C."/>
            <person name="Du Z."/>
            <person name="Lin W."/>
            <person name="Wang J."/>
            <person name="Yu J."/>
            <person name="Yang H."/>
            <person name="Wang J."/>
            <person name="Huang P."/>
            <person name="Yang R."/>
        </authorList>
    </citation>
    <scope>NUCLEOTIDE SEQUENCE [LARGE SCALE GENOMIC DNA]</scope>
    <source>
        <strain>91001 / Biovar Mediaevalis</strain>
    </source>
</reference>
<organism>
    <name type="scientific">Yersinia pestis</name>
    <dbReference type="NCBI Taxonomy" id="632"/>
    <lineage>
        <taxon>Bacteria</taxon>
        <taxon>Pseudomonadati</taxon>
        <taxon>Pseudomonadota</taxon>
        <taxon>Gammaproteobacteria</taxon>
        <taxon>Enterobacterales</taxon>
        <taxon>Yersiniaceae</taxon>
        <taxon>Yersinia</taxon>
    </lineage>
</organism>
<keyword id="KW-0378">Hydrolase</keyword>
<keyword id="KW-0460">Magnesium</keyword>
<keyword id="KW-0479">Metal-binding</keyword>
<keyword id="KW-1185">Reference proteome</keyword>
<sequence length="273" mass="30482">MYRLAAFDMDGTLLMRDHKIGSITLNALHQLADAGVTLTFATGRHYLDMKGILSHSGLNGYLITGNGTRVCDAEGNPLYGMDLPAELVEFVLRTPWQTNASIHLFRDDGWFTDRNDPDLLIAHTTSGFHFQLTEWDELPLTGNHKFCFIASHQELVELKAQLEQQMGGEADFCFSATDCLEVLPRGCNKGVALEKLSHHLDLTLADCMAFGDAMNDKEMLSRVGRGLVMGNALPQLKQELPQLQIIGRCEQQGVAHYLHHWLSSPHLTYSPEF</sequence>
<protein>
    <recommendedName>
        <fullName evidence="1">HMP-PP phosphatase</fullName>
        <ecNumber evidence="1">3.6.1.-</ecNumber>
    </recommendedName>
</protein>
<gene>
    <name evidence="1" type="primary">cof</name>
    <name type="ordered locus">YPO3148</name>
    <name type="ordered locus">y1036</name>
    <name type="ordered locus">YP_0783</name>
</gene>
<proteinExistence type="inferred from homology"/>
<feature type="chain" id="PRO_0000343001" description="HMP-PP phosphatase">
    <location>
        <begin position="1"/>
        <end position="273"/>
    </location>
</feature>
<feature type="active site" description="Nucleophile" evidence="1">
    <location>
        <position position="8"/>
    </location>
</feature>
<feature type="binding site" evidence="1">
    <location>
        <position position="8"/>
    </location>
    <ligand>
        <name>Mg(2+)</name>
        <dbReference type="ChEBI" id="CHEBI:18420"/>
    </ligand>
</feature>
<feature type="binding site" evidence="1">
    <location>
        <position position="10"/>
    </location>
    <ligand>
        <name>Mg(2+)</name>
        <dbReference type="ChEBI" id="CHEBI:18420"/>
    </ligand>
</feature>
<feature type="binding site" evidence="1">
    <location>
        <position position="212"/>
    </location>
    <ligand>
        <name>Mg(2+)</name>
        <dbReference type="ChEBI" id="CHEBI:18420"/>
    </ligand>
</feature>
<dbReference type="EC" id="3.6.1.-" evidence="1"/>
<dbReference type="EMBL" id="AL590842">
    <property type="protein sequence ID" value="CAL21743.1"/>
    <property type="molecule type" value="Genomic_DNA"/>
</dbReference>
<dbReference type="EMBL" id="AE009952">
    <property type="protein sequence ID" value="AAM84617.1"/>
    <property type="molecule type" value="Genomic_DNA"/>
</dbReference>
<dbReference type="EMBL" id="AE017042">
    <property type="protein sequence ID" value="AAS61048.1"/>
    <property type="molecule type" value="Genomic_DNA"/>
</dbReference>
<dbReference type="PIR" id="AD0382">
    <property type="entry name" value="AD0382"/>
</dbReference>
<dbReference type="RefSeq" id="WP_002208632.1">
    <property type="nucleotide sequence ID" value="NZ_WUCM01000043.1"/>
</dbReference>
<dbReference type="RefSeq" id="YP_002348053.1">
    <property type="nucleotide sequence ID" value="NC_003143.1"/>
</dbReference>
<dbReference type="SMR" id="Q7CK25"/>
<dbReference type="STRING" id="214092.YPO3148"/>
<dbReference type="PaxDb" id="214092-YPO3148"/>
<dbReference type="DNASU" id="1145983"/>
<dbReference type="EnsemblBacteria" id="AAS61048">
    <property type="protein sequence ID" value="AAS61048"/>
    <property type="gene ID" value="YP_0783"/>
</dbReference>
<dbReference type="GeneID" id="57975563"/>
<dbReference type="KEGG" id="ype:YPO3148"/>
<dbReference type="KEGG" id="ypk:y1036"/>
<dbReference type="KEGG" id="ypm:YP_0783"/>
<dbReference type="PATRIC" id="fig|1028802.3.peg.102"/>
<dbReference type="eggNOG" id="COG0561">
    <property type="taxonomic scope" value="Bacteria"/>
</dbReference>
<dbReference type="HOGENOM" id="CLU_044146_5_2_6"/>
<dbReference type="OMA" id="CFSAMDC"/>
<dbReference type="OrthoDB" id="5498330at2"/>
<dbReference type="Proteomes" id="UP000000815">
    <property type="component" value="Chromosome"/>
</dbReference>
<dbReference type="Proteomes" id="UP000001019">
    <property type="component" value="Chromosome"/>
</dbReference>
<dbReference type="Proteomes" id="UP000002490">
    <property type="component" value="Chromosome"/>
</dbReference>
<dbReference type="GO" id="GO:0002145">
    <property type="term" value="F:4-amino-5-hydroxymethyl-2-methylpyrimidine diphosphatase activity"/>
    <property type="evidence" value="ECO:0007669"/>
    <property type="project" value="RHEA"/>
</dbReference>
<dbReference type="GO" id="GO:0000287">
    <property type="term" value="F:magnesium ion binding"/>
    <property type="evidence" value="ECO:0000250"/>
    <property type="project" value="UniProtKB"/>
</dbReference>
<dbReference type="GO" id="GO:0016791">
    <property type="term" value="F:phosphatase activity"/>
    <property type="evidence" value="ECO:0000250"/>
    <property type="project" value="UniProtKB"/>
</dbReference>
<dbReference type="CDD" id="cd07516">
    <property type="entry name" value="HAD_Pase"/>
    <property type="match status" value="1"/>
</dbReference>
<dbReference type="FunFam" id="3.30.1240.10:FF:000018">
    <property type="entry name" value="HMP-PP phosphatase"/>
    <property type="match status" value="1"/>
</dbReference>
<dbReference type="Gene3D" id="3.30.1240.10">
    <property type="match status" value="1"/>
</dbReference>
<dbReference type="Gene3D" id="3.40.50.1000">
    <property type="entry name" value="HAD superfamily/HAD-like"/>
    <property type="match status" value="1"/>
</dbReference>
<dbReference type="HAMAP" id="MF_01847">
    <property type="entry name" value="HMP_PP_phosphat"/>
    <property type="match status" value="1"/>
</dbReference>
<dbReference type="InterPro" id="IPR000150">
    <property type="entry name" value="Cof"/>
</dbReference>
<dbReference type="InterPro" id="IPR036412">
    <property type="entry name" value="HAD-like_sf"/>
</dbReference>
<dbReference type="InterPro" id="IPR006379">
    <property type="entry name" value="HAD-SF_hydro_IIB"/>
</dbReference>
<dbReference type="InterPro" id="IPR023214">
    <property type="entry name" value="HAD_sf"/>
</dbReference>
<dbReference type="InterPro" id="IPR023938">
    <property type="entry name" value="HMP-PP_phosphatase"/>
</dbReference>
<dbReference type="NCBIfam" id="TIGR00099">
    <property type="entry name" value="Cof-subfamily"/>
    <property type="match status" value="1"/>
</dbReference>
<dbReference type="NCBIfam" id="TIGR01484">
    <property type="entry name" value="HAD-SF-IIB"/>
    <property type="match status" value="1"/>
</dbReference>
<dbReference type="NCBIfam" id="NF011705">
    <property type="entry name" value="PRK15126.1"/>
    <property type="match status" value="1"/>
</dbReference>
<dbReference type="PANTHER" id="PTHR47267">
    <property type="match status" value="1"/>
</dbReference>
<dbReference type="PANTHER" id="PTHR47267:SF2">
    <property type="entry name" value="HMP-PP PHOSPHATASE"/>
    <property type="match status" value="1"/>
</dbReference>
<dbReference type="Pfam" id="PF08282">
    <property type="entry name" value="Hydrolase_3"/>
    <property type="match status" value="1"/>
</dbReference>
<dbReference type="SFLD" id="SFLDG01140">
    <property type="entry name" value="C2.B:_Phosphomannomutase_and_P"/>
    <property type="match status" value="1"/>
</dbReference>
<dbReference type="SFLD" id="SFLDS00003">
    <property type="entry name" value="Haloacid_Dehalogenase"/>
    <property type="match status" value="1"/>
</dbReference>
<dbReference type="SUPFAM" id="SSF56784">
    <property type="entry name" value="HAD-like"/>
    <property type="match status" value="1"/>
</dbReference>
<dbReference type="PROSITE" id="PS01228">
    <property type="entry name" value="COF_1"/>
    <property type="match status" value="1"/>
</dbReference>
<dbReference type="PROSITE" id="PS01229">
    <property type="entry name" value="COF_2"/>
    <property type="match status" value="1"/>
</dbReference>
<accession>Q7CK25</accession>
<accession>Q74WR2</accession>
<name>COF_YERPE</name>
<evidence type="ECO:0000255" key="1">
    <source>
        <dbReference type="HAMAP-Rule" id="MF_01847"/>
    </source>
</evidence>